<organism evidence="8">
    <name type="scientific">Caenorhabditis elegans</name>
    <dbReference type="NCBI Taxonomy" id="6239"/>
    <lineage>
        <taxon>Eukaryota</taxon>
        <taxon>Metazoa</taxon>
        <taxon>Ecdysozoa</taxon>
        <taxon>Nematoda</taxon>
        <taxon>Chromadorea</taxon>
        <taxon>Rhabditida</taxon>
        <taxon>Rhabditina</taxon>
        <taxon>Rhabditomorpha</taxon>
        <taxon>Rhabditoidea</taxon>
        <taxon>Rhabditidae</taxon>
        <taxon>Peloderinae</taxon>
        <taxon>Caenorhabditis</taxon>
    </lineage>
</organism>
<gene>
    <name evidence="9" type="primary">pdf-2</name>
    <name evidence="9" type="synonym">nlp-37</name>
    <name evidence="7" type="synonym">pdf2</name>
    <name evidence="9" type="ORF">F48B9.4</name>
</gene>
<reference evidence="7" key="1">
    <citation type="journal article" date="2009" name="J. Neurochem.">
        <title>Discovery and characterization of a conserved pigment dispersing factor-like neuropeptide pathway in Caenorhabditis elegans.</title>
        <authorList>
            <person name="Janssen T."/>
            <person name="Husson S.J."/>
            <person name="Meelkop E."/>
            <person name="Temmerman L."/>
            <person name="Lindemans M."/>
            <person name="Verstraelen K."/>
            <person name="Rademakers S."/>
            <person name="Mertens I."/>
            <person name="Nitabach M."/>
            <person name="Jansen G."/>
            <person name="Schoofs L."/>
        </authorList>
    </citation>
    <scope>NUCLEOTIDE SEQUENCE [MRNA]</scope>
    <scope>DEVELOPMENTAL STAGE</scope>
</reference>
<reference evidence="8" key="2">
    <citation type="journal article" date="1998" name="Science">
        <title>Genome sequence of the nematode C. elegans: a platform for investigating biology.</title>
        <authorList>
            <consortium name="The C. elegans sequencing consortium"/>
        </authorList>
    </citation>
    <scope>NUCLEOTIDE SEQUENCE [LARGE SCALE GENOMIC DNA]</scope>
    <source>
        <strain evidence="8">Bristol N2</strain>
    </source>
</reference>
<reference evidence="6" key="3">
    <citation type="journal article" date="2008" name="J. Biol. Chem.">
        <title>Functional characterization of three G protein-coupled receptors for pigment dispersing factors in Caenorhabditis elegans.</title>
        <authorList>
            <person name="Janssen T."/>
            <person name="Husson S.J."/>
            <person name="Lindemans M."/>
            <person name="Mertens I."/>
            <person name="Rademakers S."/>
            <person name="Donck K.V."/>
            <person name="Geysen J."/>
            <person name="Jansen G."/>
            <person name="Schoofs L."/>
        </authorList>
    </citation>
    <scope>FUNCTION</scope>
</reference>
<reference evidence="6" key="4">
    <citation type="journal article" date="2012" name="Mol. Cell. Endocrinol.">
        <title>PDF receptor signaling in Caenorhabditis elegans modulates locomotion and egg-laying.</title>
        <authorList>
            <person name="Meelkop E."/>
            <person name="Temmerman L."/>
            <person name="Janssen T."/>
            <person name="Suetens N."/>
            <person name="Beets I."/>
            <person name="Van Rompay L."/>
            <person name="Shanmugam N."/>
            <person name="Husson S.J."/>
            <person name="Schoofs L."/>
        </authorList>
    </citation>
    <scope>FUNCTION</scope>
    <scope>DISRUPTION PHENOTYPE</scope>
</reference>
<reference evidence="6" key="5">
    <citation type="journal article" date="2015" name="Genes Brain Behav.">
        <title>Pigment-dispersing factor signaling in the circadian system of Caenorhabditis elegans.</title>
        <authorList>
            <person name="Herrero A."/>
            <person name="Romanowski A."/>
            <person name="Meelkop E."/>
            <person name="Caldart C.S."/>
            <person name="Schoofs L."/>
            <person name="Golombek D.A."/>
        </authorList>
    </citation>
    <scope>FUNCTION</scope>
</reference>
<dbReference type="EMBL" id="EF141321">
    <property type="protein sequence ID" value="ABO42260.1"/>
    <property type="molecule type" value="mRNA"/>
</dbReference>
<dbReference type="EMBL" id="BX284606">
    <property type="protein sequence ID" value="CCD68823.1"/>
    <property type="molecule type" value="Genomic_DNA"/>
</dbReference>
<dbReference type="PIR" id="T16394">
    <property type="entry name" value="T16394"/>
</dbReference>
<dbReference type="RefSeq" id="NP_508397.2">
    <property type="nucleotide sequence ID" value="NM_075996.2"/>
</dbReference>
<dbReference type="FunCoup" id="G5EGC3">
    <property type="interactions" value="1522"/>
</dbReference>
<dbReference type="STRING" id="6239.F48B9.4.1"/>
<dbReference type="PaxDb" id="6239-F48B9.4"/>
<dbReference type="EnsemblMetazoa" id="F48B9.4.1">
    <property type="protein sequence ID" value="F48B9.4.1"/>
    <property type="gene ID" value="WBGene00018590"/>
</dbReference>
<dbReference type="GeneID" id="185966"/>
<dbReference type="KEGG" id="cel:CELE_F48B9.4"/>
<dbReference type="AGR" id="WB:WBGene00018590"/>
<dbReference type="CTD" id="185966"/>
<dbReference type="WormBase" id="F48B9.4">
    <property type="protein sequence ID" value="CE30276"/>
    <property type="gene ID" value="WBGene00018590"/>
    <property type="gene designation" value="pdf-2"/>
</dbReference>
<dbReference type="eggNOG" id="ENOG502SXAU">
    <property type="taxonomic scope" value="Eukaryota"/>
</dbReference>
<dbReference type="HOGENOM" id="CLU_2471188_0_0_1"/>
<dbReference type="InParanoid" id="G5EGC3"/>
<dbReference type="OMA" id="FYNSRQF"/>
<dbReference type="OrthoDB" id="5862353at2759"/>
<dbReference type="PRO" id="PR:G5EGC3"/>
<dbReference type="Proteomes" id="UP000001940">
    <property type="component" value="Chromosome X"/>
</dbReference>
<dbReference type="Bgee" id="WBGene00018590">
    <property type="expression patterns" value="Expressed in larva and 3 other cell types or tissues"/>
</dbReference>
<dbReference type="GO" id="GO:0007189">
    <property type="term" value="P:adenylate cyclase-activating G protein-coupled receptor signaling pathway"/>
    <property type="evidence" value="ECO:0000315"/>
    <property type="project" value="UniProtKB"/>
</dbReference>
<dbReference type="GO" id="GO:0040011">
    <property type="term" value="P:locomotion"/>
    <property type="evidence" value="ECO:0000315"/>
    <property type="project" value="UniProtKB"/>
</dbReference>
<dbReference type="GO" id="GO:0045475">
    <property type="term" value="P:locomotor rhythm"/>
    <property type="evidence" value="ECO:0000315"/>
    <property type="project" value="UniProtKB"/>
</dbReference>
<dbReference type="GO" id="GO:0035641">
    <property type="term" value="P:locomotory exploration behavior"/>
    <property type="evidence" value="ECO:0000315"/>
    <property type="project" value="UniProtKB"/>
</dbReference>
<dbReference type="GO" id="GO:0007567">
    <property type="term" value="P:parturition"/>
    <property type="evidence" value="ECO:0000315"/>
    <property type="project" value="UniProtKB"/>
</dbReference>
<protein>
    <recommendedName>
        <fullName evidence="6">Pigment dispersing factor homolog pdf-2</fullName>
    </recommendedName>
</protein>
<name>PDF2_CAEEL</name>
<evidence type="ECO:0000255" key="1"/>
<evidence type="ECO:0000269" key="2">
    <source>
    </source>
</evidence>
<evidence type="ECO:0000269" key="3">
    <source>
    </source>
</evidence>
<evidence type="ECO:0000269" key="4">
    <source>
    </source>
</evidence>
<evidence type="ECO:0000269" key="5">
    <source>
    </source>
</evidence>
<evidence type="ECO:0000305" key="6"/>
<evidence type="ECO:0000312" key="7">
    <source>
        <dbReference type="EMBL" id="ABO42260.1"/>
    </source>
</evidence>
<evidence type="ECO:0000312" key="8">
    <source>
        <dbReference type="Proteomes" id="UP000001940"/>
    </source>
</evidence>
<evidence type="ECO:0000312" key="9">
    <source>
        <dbReference type="WormBase" id="F48B9.4"/>
    </source>
</evidence>
<sequence>MSSRISVSLLLLAVVATMFFTANVVDATPRSQGNMMRYGNSLPAYAPHVLYRFYNSRQFAPINKRNNAEVVNHILKNFGALDRLGDVGK</sequence>
<proteinExistence type="evidence at transcript level"/>
<accession>G5EGC3</accession>
<keyword id="KW-1185">Reference proteome</keyword>
<keyword id="KW-0732">Signal</keyword>
<feature type="signal peptide" evidence="1">
    <location>
        <begin position="1"/>
        <end position="27"/>
    </location>
</feature>
<feature type="chain" id="PRO_5015092027" description="Pigment dispersing factor homolog pdf-2" evidence="1">
    <location>
        <begin position="28"/>
        <end position="89"/>
    </location>
</feature>
<comment type="function">
    <text evidence="2 4 5">Probable ligand of isoforms a and b of the calcitonin receptor-like protein, pdfr-1, a G-protein coupled receptor (PubMed:18390545). May not signal through isoform c of pdfr-1 (PubMed:18390545). Involved in locomotion; may play a role in circadian rhythms of locomotor activity (PubMed:18390545, PubMed:22579613, PubMed:26113231). Modulator of egg-laying (PubMed:22579613).</text>
</comment>
<comment type="developmental stage">
    <text evidence="3">Expressed in the interneurons BDUL/R, AVG, AIML/R, RIS, AVD and PVT, the chemosensory neuron pairs PHA and PHB, the motor neurons RID and RIML/R, the sensory neurons AQR and PQR, and in the PVPL/R interneurons (PubMed:19686386). Also expressed in rectal gland cells rectD and rectVL/R, the intestino-rectal valve cells virL/R and three posterior arcade cells in the head (PubMed:19686386).</text>
</comment>
<comment type="disruption phenotype">
    <text evidence="4">Delay in the timing of the reproductive peak of egg-laying.</text>
</comment>